<name>ADAM5_MACFA</name>
<feature type="signal peptide" evidence="3">
    <location>
        <begin position="1"/>
        <end position="16"/>
    </location>
</feature>
<feature type="propeptide" id="PRO_0000349299" evidence="3">
    <location>
        <begin position="17"/>
        <end position="142"/>
    </location>
</feature>
<feature type="chain" id="PRO_5000146218" description="Disintegrin and metalloproteinase domain-containing protein 5">
    <location>
        <begin position="143"/>
        <end position="756"/>
    </location>
</feature>
<feature type="topological domain" description="Extracellular" evidence="3">
    <location>
        <begin position="17"/>
        <end position="698"/>
    </location>
</feature>
<feature type="transmembrane region" description="Helical" evidence="3">
    <location>
        <begin position="699"/>
        <end position="719"/>
    </location>
</feature>
<feature type="topological domain" description="Cytoplasmic" evidence="3">
    <location>
        <begin position="720"/>
        <end position="756"/>
    </location>
</feature>
<feature type="domain" description="Peptidase M12B" evidence="6">
    <location>
        <begin position="183"/>
        <end position="380"/>
    </location>
</feature>
<feature type="domain" description="Disintegrin" evidence="4">
    <location>
        <begin position="389"/>
        <end position="478"/>
    </location>
</feature>
<feature type="domain" description="EGF-like" evidence="5">
    <location>
        <begin position="630"/>
        <end position="664"/>
    </location>
</feature>
<feature type="region of interest" description="Disordered" evidence="7">
    <location>
        <begin position="731"/>
        <end position="756"/>
    </location>
</feature>
<feature type="compositionally biased region" description="Low complexity" evidence="7">
    <location>
        <begin position="735"/>
        <end position="756"/>
    </location>
</feature>
<feature type="glycosylation site" description="N-linked (GlcNAc...) asparagine" evidence="3">
    <location>
        <position position="559"/>
    </location>
</feature>
<feature type="disulfide bond" evidence="1">
    <location>
        <begin position="292"/>
        <end position="375"/>
    </location>
</feature>
<feature type="disulfide bond" evidence="1">
    <location>
        <begin position="334"/>
        <end position="359"/>
    </location>
</feature>
<feature type="disulfide bond" evidence="1">
    <location>
        <begin position="336"/>
        <end position="341"/>
    </location>
</feature>
<feature type="disulfide bond" evidence="1">
    <location>
        <begin position="449"/>
        <end position="470"/>
    </location>
</feature>
<feature type="disulfide bond" evidence="1">
    <location>
        <begin position="634"/>
        <end position="646"/>
    </location>
</feature>
<feature type="disulfide bond" evidence="1">
    <location>
        <begin position="640"/>
        <end position="652"/>
    </location>
</feature>
<feature type="disulfide bond" evidence="1">
    <location>
        <begin position="654"/>
        <end position="663"/>
    </location>
</feature>
<accession>Q28483</accession>
<protein>
    <recommendedName>
        <fullName>Disintegrin and metalloproteinase domain-containing protein 5</fullName>
    </recommendedName>
    <alternativeName>
        <fullName>Transmembrane metalloproteinase-like, disintegrin-like, and cysteine-rich protein II</fullName>
        <shortName>tMDC II</shortName>
    </alternativeName>
</protein>
<comment type="function">
    <text evidence="1">This is a non catalytic metalloprotease-like protein. May play a role in sperm-egg fusion (By similarity).</text>
</comment>
<comment type="subunit">
    <text evidence="2">Interacts with TEX101.</text>
</comment>
<comment type="subcellular location">
    <subcellularLocation>
        <location evidence="9">Membrane</location>
        <topology evidence="9">Single-pass type I membrane protein</topology>
    </subcellularLocation>
</comment>
<comment type="tissue specificity">
    <text evidence="8">Detected in testis (at protein level). Detected in adult and prepubertal testis. Detected at very low levels in heart, kidney, brain, muscle ovary and uterus.</text>
</comment>
<comment type="developmental stage">
    <text evidence="8">Detected in elongate spermatids, and in caput and cauda epididymal spermatozoa (at protein level).</text>
</comment>
<comment type="PTM">
    <text evidence="8">Subject to proteolytic processing during epididymal transit of spermatozoa.</text>
</comment>
<comment type="caution">
    <text evidence="9">Not expected to have protease activity.</text>
</comment>
<gene>
    <name type="primary">ADAM5</name>
    <name type="synonym">TMDC2</name>
</gene>
<organism>
    <name type="scientific">Macaca fascicularis</name>
    <name type="common">Crab-eating macaque</name>
    <name type="synonym">Cynomolgus monkey</name>
    <dbReference type="NCBI Taxonomy" id="9541"/>
    <lineage>
        <taxon>Eukaryota</taxon>
        <taxon>Metazoa</taxon>
        <taxon>Chordata</taxon>
        <taxon>Craniata</taxon>
        <taxon>Vertebrata</taxon>
        <taxon>Euteleostomi</taxon>
        <taxon>Mammalia</taxon>
        <taxon>Eutheria</taxon>
        <taxon>Euarchontoglires</taxon>
        <taxon>Primates</taxon>
        <taxon>Haplorrhini</taxon>
        <taxon>Catarrhini</taxon>
        <taxon>Cercopithecidae</taxon>
        <taxon>Cercopithecinae</taxon>
        <taxon>Macaca</taxon>
    </lineage>
</organism>
<reference key="1">
    <citation type="journal article" date="1994" name="Biochim. Biophys. Acta">
        <title>Genetic evidence for an additional member of the metalloproteinase-like, disintegrin-like, cysteine-rich (MDC) family of mammalian proteins and its abundant expression in the testis.</title>
        <authorList>
            <person name="Perry A.C.F."/>
            <person name="Barker H.L."/>
            <person name="Jones R."/>
            <person name="Hall L."/>
        </authorList>
    </citation>
    <scope>NUCLEOTIDE SEQUENCE [MRNA]</scope>
    <source>
        <tissue>Testis</tissue>
    </source>
</reference>
<reference key="2">
    <citation type="journal article" date="1998" name="Mol. Hum. Reprod.">
        <title>Macaque MDC family of proteins: sequence analysis, tissue distribution and processing in the male reproductive tract.</title>
        <authorList>
            <person name="Frayne J."/>
            <person name="Jury J.A."/>
            <person name="Barker H.L."/>
            <person name="Perry A.C.F."/>
            <person name="Jones R."/>
            <person name="Hall L."/>
        </authorList>
    </citation>
    <scope>TISSUE SPECIFICITY</scope>
    <scope>PROTEOLYTIC PROCESSING</scope>
    <scope>DEVELOPMENTAL STAGE</scope>
</reference>
<sequence length="756" mass="85043">MFLLLVLLTGLGGMHADLNPHKTFLQTTIPEKISSSDAKTDPEHNVVYMITIEGKPYFVHLKKQSILSSASFIHSYDKNDIRHSKPLLVQMDCNYNGYVAGIPNSLVTLSVCSGLRGTMQLKNISYGIEPMEAVSGFIHKIYEEKFADTNILLEENDTYSWFNSEYQVRKSSEKTDFIKLFPRYIEMHIVVDKNLFDYMGSDINAVTQKVIQIIGLVNTMLTQLQLTVIISSIEIWSNKNKISTTGHAEYVLLEFFEWKKDHLNFKPHQIAYLFVYRKLPTLIGATFPGQVCNKDFAAAVALYPEGLSLESYTVIIVQLLGLNLGLTYDKTDTCHCSGDVCTMTPKAVYSGGVKDFSVCSLDDFKYISSHNGLTCLQTNPLEMPTYTQRRICGNGLLEGGEECDCGNKDNCTHKLCCDALTCRLKDNAQCGSGDCCSKDCKFKPANTICRKSVDVECDFTEFCNGSYPYCLLDTYVRDGEYCDSGGAFCFQGRCRTFDKQCDDLIGRGSRGAPIFCYDEINTRGDKFGNCGTEYCLFQHILCGKLVCTWEHKDLISRPNLSVIYAHVRDQTCVSTYLPSRKPPPVASTVSKTSYYSVDDRDETFVQDGSVCGPDMYCFKMRCKHVRFLMDFETCEASIECSGHGICNNFNHCHCEKGYNPPHCKPKKEAFGSTDDGHLVPAEKSYMEEGRHAPFQKQRFQLIFYISLPVLIITTAILIKRKKLRELCYRGETESESSVSQESSSNSKSSLSESTSL</sequence>
<dbReference type="EMBL" id="X77619">
    <property type="protein sequence ID" value="CAA54713.1"/>
    <property type="molecule type" value="mRNA"/>
</dbReference>
<dbReference type="PIR" id="S47656">
    <property type="entry name" value="S47656"/>
</dbReference>
<dbReference type="RefSeq" id="NP_001270657.1">
    <property type="nucleotide sequence ID" value="NM_001283728.1"/>
</dbReference>
<dbReference type="SMR" id="Q28483"/>
<dbReference type="STRING" id="9541.ENSMFAP00000026468"/>
<dbReference type="MEROPS" id="M12.957"/>
<dbReference type="GlyCosmos" id="Q28483">
    <property type="glycosylation" value="1 site, No reported glycans"/>
</dbReference>
<dbReference type="GeneID" id="101865559"/>
<dbReference type="KEGG" id="mcf:101865559"/>
<dbReference type="CTD" id="255926"/>
<dbReference type="eggNOG" id="KOG3607">
    <property type="taxonomic scope" value="Eukaryota"/>
</dbReference>
<dbReference type="OrthoDB" id="10033at314294"/>
<dbReference type="Proteomes" id="UP000233100">
    <property type="component" value="Unplaced"/>
</dbReference>
<dbReference type="GO" id="GO:0005886">
    <property type="term" value="C:plasma membrane"/>
    <property type="evidence" value="ECO:0007669"/>
    <property type="project" value="UniProtKB-ARBA"/>
</dbReference>
<dbReference type="GO" id="GO:0004222">
    <property type="term" value="F:metalloendopeptidase activity"/>
    <property type="evidence" value="ECO:0007669"/>
    <property type="project" value="InterPro"/>
</dbReference>
<dbReference type="GO" id="GO:0007339">
    <property type="term" value="P:binding of sperm to zona pellucida"/>
    <property type="evidence" value="ECO:0007669"/>
    <property type="project" value="TreeGrafter"/>
</dbReference>
<dbReference type="GO" id="GO:0007155">
    <property type="term" value="P:cell adhesion"/>
    <property type="evidence" value="ECO:0007669"/>
    <property type="project" value="TreeGrafter"/>
</dbReference>
<dbReference type="GO" id="GO:0008584">
    <property type="term" value="P:male gonad development"/>
    <property type="evidence" value="ECO:0007669"/>
    <property type="project" value="TreeGrafter"/>
</dbReference>
<dbReference type="GO" id="GO:0006508">
    <property type="term" value="P:proteolysis"/>
    <property type="evidence" value="ECO:0007669"/>
    <property type="project" value="InterPro"/>
</dbReference>
<dbReference type="CDD" id="cd04269">
    <property type="entry name" value="ZnMc_adamalysin_II_like"/>
    <property type="match status" value="1"/>
</dbReference>
<dbReference type="FunFam" id="4.10.70.10:FF:000001">
    <property type="entry name" value="Disintegrin and metalloproteinase domain-containing protein 22"/>
    <property type="match status" value="1"/>
</dbReference>
<dbReference type="Gene3D" id="3.40.390.10">
    <property type="entry name" value="Collagenase (Catalytic Domain)"/>
    <property type="match status" value="1"/>
</dbReference>
<dbReference type="Gene3D" id="4.10.70.10">
    <property type="entry name" value="Disintegrin domain"/>
    <property type="match status" value="1"/>
</dbReference>
<dbReference type="InterPro" id="IPR006586">
    <property type="entry name" value="ADAM_Cys-rich"/>
</dbReference>
<dbReference type="InterPro" id="IPR018358">
    <property type="entry name" value="Disintegrin_CS"/>
</dbReference>
<dbReference type="InterPro" id="IPR001762">
    <property type="entry name" value="Disintegrin_dom"/>
</dbReference>
<dbReference type="InterPro" id="IPR036436">
    <property type="entry name" value="Disintegrin_dom_sf"/>
</dbReference>
<dbReference type="InterPro" id="IPR000742">
    <property type="entry name" value="EGF-like_dom"/>
</dbReference>
<dbReference type="InterPro" id="IPR013111">
    <property type="entry name" value="EGF_extracell"/>
</dbReference>
<dbReference type="InterPro" id="IPR024079">
    <property type="entry name" value="MetalloPept_cat_dom_sf"/>
</dbReference>
<dbReference type="InterPro" id="IPR001590">
    <property type="entry name" value="Peptidase_M12B"/>
</dbReference>
<dbReference type="InterPro" id="IPR002870">
    <property type="entry name" value="Peptidase_M12B_N"/>
</dbReference>
<dbReference type="InterPro" id="IPR034027">
    <property type="entry name" value="Reprolysin_adamalysin"/>
</dbReference>
<dbReference type="PANTHER" id="PTHR11905">
    <property type="entry name" value="ADAM A DISINTEGRIN AND METALLOPROTEASE DOMAIN"/>
    <property type="match status" value="1"/>
</dbReference>
<dbReference type="PANTHER" id="PTHR11905:SF28">
    <property type="entry name" value="DISINTEGRIN AND METALLOPROTEINASE DOMAIN-CONTAINING PROTEIN 5"/>
    <property type="match status" value="1"/>
</dbReference>
<dbReference type="Pfam" id="PF08516">
    <property type="entry name" value="ADAM_CR"/>
    <property type="match status" value="1"/>
</dbReference>
<dbReference type="Pfam" id="PF00200">
    <property type="entry name" value="Disintegrin"/>
    <property type="match status" value="1"/>
</dbReference>
<dbReference type="Pfam" id="PF07974">
    <property type="entry name" value="EGF_2"/>
    <property type="match status" value="1"/>
</dbReference>
<dbReference type="Pfam" id="PF01562">
    <property type="entry name" value="Pep_M12B_propep"/>
    <property type="match status" value="1"/>
</dbReference>
<dbReference type="Pfam" id="PF01421">
    <property type="entry name" value="Reprolysin"/>
    <property type="match status" value="1"/>
</dbReference>
<dbReference type="SMART" id="SM00608">
    <property type="entry name" value="ACR"/>
    <property type="match status" value="1"/>
</dbReference>
<dbReference type="SMART" id="SM00050">
    <property type="entry name" value="DISIN"/>
    <property type="match status" value="1"/>
</dbReference>
<dbReference type="SUPFAM" id="SSF57552">
    <property type="entry name" value="Blood coagulation inhibitor (disintegrin)"/>
    <property type="match status" value="1"/>
</dbReference>
<dbReference type="SUPFAM" id="SSF55486">
    <property type="entry name" value="Metalloproteases ('zincins'), catalytic domain"/>
    <property type="match status" value="1"/>
</dbReference>
<dbReference type="PROSITE" id="PS50215">
    <property type="entry name" value="ADAM_MEPRO"/>
    <property type="match status" value="1"/>
</dbReference>
<dbReference type="PROSITE" id="PS00427">
    <property type="entry name" value="DISINTEGRIN_1"/>
    <property type="match status" value="1"/>
</dbReference>
<dbReference type="PROSITE" id="PS50214">
    <property type="entry name" value="DISINTEGRIN_2"/>
    <property type="match status" value="1"/>
</dbReference>
<dbReference type="PROSITE" id="PS01186">
    <property type="entry name" value="EGF_2"/>
    <property type="match status" value="1"/>
</dbReference>
<dbReference type="PROSITE" id="PS50026">
    <property type="entry name" value="EGF_3"/>
    <property type="match status" value="1"/>
</dbReference>
<keyword id="KW-1015">Disulfide bond</keyword>
<keyword id="KW-0245">EGF-like domain</keyword>
<keyword id="KW-0325">Glycoprotein</keyword>
<keyword id="KW-0472">Membrane</keyword>
<keyword id="KW-1185">Reference proteome</keyword>
<keyword id="KW-0732">Signal</keyword>
<keyword id="KW-0812">Transmembrane</keyword>
<keyword id="KW-1133">Transmembrane helix</keyword>
<proteinExistence type="evidence at protein level"/>
<evidence type="ECO:0000250" key="1"/>
<evidence type="ECO:0000250" key="2">
    <source>
        <dbReference type="UniProtKB" id="Q3TTE0"/>
    </source>
</evidence>
<evidence type="ECO:0000255" key="3"/>
<evidence type="ECO:0000255" key="4">
    <source>
        <dbReference type="PROSITE-ProRule" id="PRU00068"/>
    </source>
</evidence>
<evidence type="ECO:0000255" key="5">
    <source>
        <dbReference type="PROSITE-ProRule" id="PRU00076"/>
    </source>
</evidence>
<evidence type="ECO:0000255" key="6">
    <source>
        <dbReference type="PROSITE-ProRule" id="PRU00276"/>
    </source>
</evidence>
<evidence type="ECO:0000256" key="7">
    <source>
        <dbReference type="SAM" id="MobiDB-lite"/>
    </source>
</evidence>
<evidence type="ECO:0000269" key="8">
    <source>
    </source>
</evidence>
<evidence type="ECO:0000305" key="9"/>